<protein>
    <recommendedName>
        <fullName evidence="1">UDP-N-acetylglucosamine--N-acetylmuramyl-(pentapeptide) pyrophosphoryl-undecaprenol N-acetylglucosamine transferase</fullName>
        <ecNumber evidence="1">2.4.1.227</ecNumber>
    </recommendedName>
    <alternativeName>
        <fullName evidence="1">Undecaprenyl-PP-MurNAc-pentapeptide-UDPGlcNAc GlcNAc transferase</fullName>
    </alternativeName>
</protein>
<reference key="1">
    <citation type="journal article" date="2014" name="Stand. Genomic Sci.">
        <title>Complete genome sequence of Burkholderia phymatum STM815(T), a broad host range and efficient nitrogen-fixing symbiont of Mimosa species.</title>
        <authorList>
            <person name="Moulin L."/>
            <person name="Klonowska A."/>
            <person name="Caroline B."/>
            <person name="Booth K."/>
            <person name="Vriezen J.A."/>
            <person name="Melkonian R."/>
            <person name="James E.K."/>
            <person name="Young J.P."/>
            <person name="Bena G."/>
            <person name="Hauser L."/>
            <person name="Land M."/>
            <person name="Kyrpides N."/>
            <person name="Bruce D."/>
            <person name="Chain P."/>
            <person name="Copeland A."/>
            <person name="Pitluck S."/>
            <person name="Woyke T."/>
            <person name="Lizotte-Waniewski M."/>
            <person name="Bristow J."/>
            <person name="Riley M."/>
        </authorList>
    </citation>
    <scope>NUCLEOTIDE SEQUENCE [LARGE SCALE GENOMIC DNA]</scope>
    <source>
        <strain>DSM 17167 / CIP 108236 / LMG 21445 / STM815</strain>
    </source>
</reference>
<proteinExistence type="inferred from homology"/>
<sequence length="373" mass="39575">MTRMQQRTLMVMAGGTGGHVFPGLAVAHLMQAWGWRVVWLGNPNGMEATLVPKHGIPMEYVQFGGLRGKGMKTKLMLPVNLLRACMQSLSVLRRVKPDVVLGMGGYITFPAGMMTALSGTPLVLHEQNSIAGLANKVLAKLAKRVLVAFPKALPHAEWTGNPIREELARTTAPRQRYAARSGPLNVLVVGGSLGASALNEVVPRALAKLAPHERPRIVHQAGAKHIDALRANYEAAGIAAGDGAQLVPFIDDMTSAYANADLVICRSGAMTVAEIAAVGVAAFFVPFPYAVDDHQTTNAAFLADNGAALLVQQRDLSADALADWLRSQTRASLAEMAERSRSLAKPDATEQVAQICATVAGVTPSLSPEGKQQ</sequence>
<feature type="chain" id="PRO_1000090413" description="UDP-N-acetylglucosamine--N-acetylmuramyl-(pentapeptide) pyrophosphoryl-undecaprenol N-acetylglucosamine transferase">
    <location>
        <begin position="1"/>
        <end position="373"/>
    </location>
</feature>
<feature type="binding site" evidence="1">
    <location>
        <begin position="16"/>
        <end position="18"/>
    </location>
    <ligand>
        <name>UDP-N-acetyl-alpha-D-glucosamine</name>
        <dbReference type="ChEBI" id="CHEBI:57705"/>
    </ligand>
</feature>
<feature type="binding site" evidence="1">
    <location>
        <position position="128"/>
    </location>
    <ligand>
        <name>UDP-N-acetyl-alpha-D-glucosamine</name>
        <dbReference type="ChEBI" id="CHEBI:57705"/>
    </ligand>
</feature>
<feature type="binding site" evidence="1">
    <location>
        <position position="164"/>
    </location>
    <ligand>
        <name>UDP-N-acetyl-alpha-D-glucosamine</name>
        <dbReference type="ChEBI" id="CHEBI:57705"/>
    </ligand>
</feature>
<feature type="binding site" evidence="1">
    <location>
        <position position="192"/>
    </location>
    <ligand>
        <name>UDP-N-acetyl-alpha-D-glucosamine</name>
        <dbReference type="ChEBI" id="CHEBI:57705"/>
    </ligand>
</feature>
<feature type="binding site" evidence="1">
    <location>
        <position position="250"/>
    </location>
    <ligand>
        <name>UDP-N-acetyl-alpha-D-glucosamine</name>
        <dbReference type="ChEBI" id="CHEBI:57705"/>
    </ligand>
</feature>
<feature type="binding site" evidence="1">
    <location>
        <position position="295"/>
    </location>
    <ligand>
        <name>UDP-N-acetyl-alpha-D-glucosamine</name>
        <dbReference type="ChEBI" id="CHEBI:57705"/>
    </ligand>
</feature>
<organism>
    <name type="scientific">Paraburkholderia phymatum (strain DSM 17167 / CIP 108236 / LMG 21445 / STM815)</name>
    <name type="common">Burkholderia phymatum</name>
    <dbReference type="NCBI Taxonomy" id="391038"/>
    <lineage>
        <taxon>Bacteria</taxon>
        <taxon>Pseudomonadati</taxon>
        <taxon>Pseudomonadota</taxon>
        <taxon>Betaproteobacteria</taxon>
        <taxon>Burkholderiales</taxon>
        <taxon>Burkholderiaceae</taxon>
        <taxon>Paraburkholderia</taxon>
    </lineage>
</organism>
<comment type="function">
    <text evidence="1">Cell wall formation. Catalyzes the transfer of a GlcNAc subunit on undecaprenyl-pyrophosphoryl-MurNAc-pentapeptide (lipid intermediate I) to form undecaprenyl-pyrophosphoryl-MurNAc-(pentapeptide)GlcNAc (lipid intermediate II).</text>
</comment>
<comment type="catalytic activity">
    <reaction evidence="1">
        <text>di-trans,octa-cis-undecaprenyl diphospho-N-acetyl-alpha-D-muramoyl-L-alanyl-D-glutamyl-meso-2,6-diaminopimeloyl-D-alanyl-D-alanine + UDP-N-acetyl-alpha-D-glucosamine = di-trans,octa-cis-undecaprenyl diphospho-[N-acetyl-alpha-D-glucosaminyl-(1-&gt;4)]-N-acetyl-alpha-D-muramoyl-L-alanyl-D-glutamyl-meso-2,6-diaminopimeloyl-D-alanyl-D-alanine + UDP + H(+)</text>
        <dbReference type="Rhea" id="RHEA:31227"/>
        <dbReference type="ChEBI" id="CHEBI:15378"/>
        <dbReference type="ChEBI" id="CHEBI:57705"/>
        <dbReference type="ChEBI" id="CHEBI:58223"/>
        <dbReference type="ChEBI" id="CHEBI:61387"/>
        <dbReference type="ChEBI" id="CHEBI:61388"/>
        <dbReference type="EC" id="2.4.1.227"/>
    </reaction>
</comment>
<comment type="pathway">
    <text evidence="1">Cell wall biogenesis; peptidoglycan biosynthesis.</text>
</comment>
<comment type="subcellular location">
    <subcellularLocation>
        <location evidence="1">Cell inner membrane</location>
        <topology evidence="1">Peripheral membrane protein</topology>
        <orientation evidence="1">Cytoplasmic side</orientation>
    </subcellularLocation>
</comment>
<comment type="similarity">
    <text evidence="1">Belongs to the glycosyltransferase 28 family. MurG subfamily.</text>
</comment>
<dbReference type="EC" id="2.4.1.227" evidence="1"/>
<dbReference type="EMBL" id="CP001043">
    <property type="protein sequence ID" value="ACC71845.1"/>
    <property type="molecule type" value="Genomic_DNA"/>
</dbReference>
<dbReference type="RefSeq" id="WP_012402044.1">
    <property type="nucleotide sequence ID" value="NC_010622.1"/>
</dbReference>
<dbReference type="SMR" id="B2JHG0"/>
<dbReference type="STRING" id="391038.Bphy_2673"/>
<dbReference type="CAZy" id="GT28">
    <property type="family name" value="Glycosyltransferase Family 28"/>
</dbReference>
<dbReference type="KEGG" id="bph:Bphy_2673"/>
<dbReference type="eggNOG" id="COG0707">
    <property type="taxonomic scope" value="Bacteria"/>
</dbReference>
<dbReference type="HOGENOM" id="CLU_037404_2_0_4"/>
<dbReference type="OrthoDB" id="9808936at2"/>
<dbReference type="UniPathway" id="UPA00219"/>
<dbReference type="Proteomes" id="UP000001192">
    <property type="component" value="Chromosome 1"/>
</dbReference>
<dbReference type="GO" id="GO:0005886">
    <property type="term" value="C:plasma membrane"/>
    <property type="evidence" value="ECO:0007669"/>
    <property type="project" value="UniProtKB-SubCell"/>
</dbReference>
<dbReference type="GO" id="GO:0051991">
    <property type="term" value="F:UDP-N-acetyl-D-glucosamine:N-acetylmuramoyl-L-alanyl-D-glutamyl-meso-2,6-diaminopimelyl-D-alanyl-D-alanine-diphosphoundecaprenol 4-beta-N-acetylglucosaminlytransferase activity"/>
    <property type="evidence" value="ECO:0007669"/>
    <property type="project" value="RHEA"/>
</dbReference>
<dbReference type="GO" id="GO:0050511">
    <property type="term" value="F:undecaprenyldiphospho-muramoylpentapeptide beta-N-acetylglucosaminyltransferase activity"/>
    <property type="evidence" value="ECO:0007669"/>
    <property type="project" value="UniProtKB-UniRule"/>
</dbReference>
<dbReference type="GO" id="GO:0005975">
    <property type="term" value="P:carbohydrate metabolic process"/>
    <property type="evidence" value="ECO:0007669"/>
    <property type="project" value="InterPro"/>
</dbReference>
<dbReference type="GO" id="GO:0051301">
    <property type="term" value="P:cell division"/>
    <property type="evidence" value="ECO:0007669"/>
    <property type="project" value="UniProtKB-KW"/>
</dbReference>
<dbReference type="GO" id="GO:0071555">
    <property type="term" value="P:cell wall organization"/>
    <property type="evidence" value="ECO:0007669"/>
    <property type="project" value="UniProtKB-KW"/>
</dbReference>
<dbReference type="GO" id="GO:0030259">
    <property type="term" value="P:lipid glycosylation"/>
    <property type="evidence" value="ECO:0007669"/>
    <property type="project" value="UniProtKB-UniRule"/>
</dbReference>
<dbReference type="GO" id="GO:0009252">
    <property type="term" value="P:peptidoglycan biosynthetic process"/>
    <property type="evidence" value="ECO:0007669"/>
    <property type="project" value="UniProtKB-UniRule"/>
</dbReference>
<dbReference type="GO" id="GO:0008360">
    <property type="term" value="P:regulation of cell shape"/>
    <property type="evidence" value="ECO:0007669"/>
    <property type="project" value="UniProtKB-KW"/>
</dbReference>
<dbReference type="CDD" id="cd03785">
    <property type="entry name" value="GT28_MurG"/>
    <property type="match status" value="1"/>
</dbReference>
<dbReference type="Gene3D" id="3.40.50.2000">
    <property type="entry name" value="Glycogen Phosphorylase B"/>
    <property type="match status" value="2"/>
</dbReference>
<dbReference type="HAMAP" id="MF_00033">
    <property type="entry name" value="MurG"/>
    <property type="match status" value="1"/>
</dbReference>
<dbReference type="InterPro" id="IPR006009">
    <property type="entry name" value="GlcNAc_MurG"/>
</dbReference>
<dbReference type="InterPro" id="IPR007235">
    <property type="entry name" value="Glyco_trans_28_C"/>
</dbReference>
<dbReference type="InterPro" id="IPR004276">
    <property type="entry name" value="GlycoTrans_28_N"/>
</dbReference>
<dbReference type="NCBIfam" id="TIGR01133">
    <property type="entry name" value="murG"/>
    <property type="match status" value="1"/>
</dbReference>
<dbReference type="PANTHER" id="PTHR21015:SF22">
    <property type="entry name" value="GLYCOSYLTRANSFERASE"/>
    <property type="match status" value="1"/>
</dbReference>
<dbReference type="PANTHER" id="PTHR21015">
    <property type="entry name" value="UDP-N-ACETYLGLUCOSAMINE--N-ACETYLMURAMYL-(PENTAPEPTIDE) PYROPHOSPHORYL-UNDECAPRENOL N-ACETYLGLUCOSAMINE TRANSFERASE 1"/>
    <property type="match status" value="1"/>
</dbReference>
<dbReference type="Pfam" id="PF04101">
    <property type="entry name" value="Glyco_tran_28_C"/>
    <property type="match status" value="1"/>
</dbReference>
<dbReference type="Pfam" id="PF03033">
    <property type="entry name" value="Glyco_transf_28"/>
    <property type="match status" value="1"/>
</dbReference>
<dbReference type="SUPFAM" id="SSF53756">
    <property type="entry name" value="UDP-Glycosyltransferase/glycogen phosphorylase"/>
    <property type="match status" value="1"/>
</dbReference>
<accession>B2JHG0</accession>
<keyword id="KW-0131">Cell cycle</keyword>
<keyword id="KW-0132">Cell division</keyword>
<keyword id="KW-0997">Cell inner membrane</keyword>
<keyword id="KW-1003">Cell membrane</keyword>
<keyword id="KW-0133">Cell shape</keyword>
<keyword id="KW-0961">Cell wall biogenesis/degradation</keyword>
<keyword id="KW-0328">Glycosyltransferase</keyword>
<keyword id="KW-0472">Membrane</keyword>
<keyword id="KW-0573">Peptidoglycan synthesis</keyword>
<keyword id="KW-1185">Reference proteome</keyword>
<keyword id="KW-0808">Transferase</keyword>
<evidence type="ECO:0000255" key="1">
    <source>
        <dbReference type="HAMAP-Rule" id="MF_00033"/>
    </source>
</evidence>
<gene>
    <name evidence="1" type="primary">murG</name>
    <name type="ordered locus">Bphy_2673</name>
</gene>
<name>MURG_PARP8</name>